<sequence>MNELDGIKQFTTVVADSGDIESIRHYHPQDATTNPSLLLKAAGLSQYEHLIDDAIAWGKKNGKTQEQQVVAACDKLAVNFGAEILKIVPGRVSTEVDARLSFDKEKSIEKARHLVDLYQQQGVEKSRILIKLASTWEGIRAAEELEKEGINCNLTLLFSFAQARACAEAGVFLISPFVGRIYDWYQARKPMDPYVVEEDPGVKSVRNIYDYYKQHHYETIVMGASFRRTEQILALTGCDRLTIAPNLLKELQEKVSPVVRKLIPPSQTFPRPAPMSEAEFRWEHNQDAMAVEKLSEGIRLFAVDQRKLEDLLAAKL</sequence>
<dbReference type="EC" id="2.2.1.2"/>
<dbReference type="EMBL" id="D13159">
    <property type="protein sequence ID" value="BAA21821.1"/>
    <property type="molecule type" value="Genomic_DNA"/>
</dbReference>
<dbReference type="EMBL" id="U00096">
    <property type="protein sequence ID" value="AAC75517.1"/>
    <property type="molecule type" value="Genomic_DNA"/>
</dbReference>
<dbReference type="EMBL" id="AP009048">
    <property type="protein sequence ID" value="BAA16339.1"/>
    <property type="molecule type" value="Genomic_DNA"/>
</dbReference>
<dbReference type="PIR" id="G65021">
    <property type="entry name" value="G65021"/>
</dbReference>
<dbReference type="RefSeq" id="NP_416959.1">
    <property type="nucleotide sequence ID" value="NC_000913.3"/>
</dbReference>
<dbReference type="SMR" id="P0A867"/>
<dbReference type="BioGRID" id="4260921">
    <property type="interactions" value="26"/>
</dbReference>
<dbReference type="DIP" id="DIP-47872N"/>
<dbReference type="FunCoup" id="P0A867">
    <property type="interactions" value="767"/>
</dbReference>
<dbReference type="IntAct" id="P0A867">
    <property type="interactions" value="11"/>
</dbReference>
<dbReference type="STRING" id="511145.b2464"/>
<dbReference type="jPOST" id="P0A867"/>
<dbReference type="PaxDb" id="511145-b2464"/>
<dbReference type="EnsemblBacteria" id="AAC75517">
    <property type="protein sequence ID" value="AAC75517"/>
    <property type="gene ID" value="b2464"/>
</dbReference>
<dbReference type="GeneID" id="947006"/>
<dbReference type="KEGG" id="ecj:JW2448"/>
<dbReference type="KEGG" id="eco:b2464"/>
<dbReference type="KEGG" id="ecoc:C3026_13670"/>
<dbReference type="PATRIC" id="fig|1411691.4.peg.4276"/>
<dbReference type="EchoBASE" id="EB1745"/>
<dbReference type="eggNOG" id="COG0176">
    <property type="taxonomic scope" value="Bacteria"/>
</dbReference>
<dbReference type="HOGENOM" id="CLU_047470_0_1_6"/>
<dbReference type="InParanoid" id="P0A867"/>
<dbReference type="OMA" id="FATIKKY"/>
<dbReference type="OrthoDB" id="9809101at2"/>
<dbReference type="PhylomeDB" id="P0A867"/>
<dbReference type="BioCyc" id="EcoCyc:TRANSALDOLA-MONOMER"/>
<dbReference type="UniPathway" id="UPA00115">
    <property type="reaction ID" value="UER00414"/>
</dbReference>
<dbReference type="PRO" id="PR:P0A867"/>
<dbReference type="Proteomes" id="UP000000625">
    <property type="component" value="Chromosome"/>
</dbReference>
<dbReference type="GO" id="GO:0005829">
    <property type="term" value="C:cytosol"/>
    <property type="evidence" value="ECO:0000314"/>
    <property type="project" value="EcoCyc"/>
</dbReference>
<dbReference type="GO" id="GO:0004801">
    <property type="term" value="F:transaldolase activity"/>
    <property type="evidence" value="ECO:0000250"/>
    <property type="project" value="UniProtKB"/>
</dbReference>
<dbReference type="GO" id="GO:0005975">
    <property type="term" value="P:carbohydrate metabolic process"/>
    <property type="evidence" value="ECO:0007669"/>
    <property type="project" value="InterPro"/>
</dbReference>
<dbReference type="GO" id="GO:0009052">
    <property type="term" value="P:pentose-phosphate shunt, non-oxidative branch"/>
    <property type="evidence" value="ECO:0000318"/>
    <property type="project" value="GO_Central"/>
</dbReference>
<dbReference type="CDD" id="cd00957">
    <property type="entry name" value="Transaldolase_TalAB"/>
    <property type="match status" value="1"/>
</dbReference>
<dbReference type="FunFam" id="3.20.20.70:FF:000002">
    <property type="entry name" value="Transaldolase"/>
    <property type="match status" value="1"/>
</dbReference>
<dbReference type="Gene3D" id="3.20.20.70">
    <property type="entry name" value="Aldolase class I"/>
    <property type="match status" value="1"/>
</dbReference>
<dbReference type="HAMAP" id="MF_00492">
    <property type="entry name" value="Transaldolase_1"/>
    <property type="match status" value="1"/>
</dbReference>
<dbReference type="InterPro" id="IPR013785">
    <property type="entry name" value="Aldolase_TIM"/>
</dbReference>
<dbReference type="InterPro" id="IPR001585">
    <property type="entry name" value="TAL/FSA"/>
</dbReference>
<dbReference type="InterPro" id="IPR004730">
    <property type="entry name" value="Transaldolase_1"/>
</dbReference>
<dbReference type="InterPro" id="IPR018225">
    <property type="entry name" value="Transaldolase_AS"/>
</dbReference>
<dbReference type="NCBIfam" id="NF009001">
    <property type="entry name" value="PRK12346.1"/>
    <property type="match status" value="1"/>
</dbReference>
<dbReference type="NCBIfam" id="TIGR00874">
    <property type="entry name" value="talAB"/>
    <property type="match status" value="1"/>
</dbReference>
<dbReference type="PANTHER" id="PTHR10683">
    <property type="entry name" value="TRANSALDOLASE"/>
    <property type="match status" value="1"/>
</dbReference>
<dbReference type="PANTHER" id="PTHR10683:SF16">
    <property type="entry name" value="TRANSALDOLASE A"/>
    <property type="match status" value="1"/>
</dbReference>
<dbReference type="Pfam" id="PF00923">
    <property type="entry name" value="TAL_FSA"/>
    <property type="match status" value="1"/>
</dbReference>
<dbReference type="SUPFAM" id="SSF51569">
    <property type="entry name" value="Aldolase"/>
    <property type="match status" value="1"/>
</dbReference>
<dbReference type="PROSITE" id="PS01054">
    <property type="entry name" value="TRANSALDOLASE_1"/>
    <property type="match status" value="1"/>
</dbReference>
<dbReference type="PROSITE" id="PS00958">
    <property type="entry name" value="TRANSALDOLASE_2"/>
    <property type="match status" value="1"/>
</dbReference>
<reference key="1">
    <citation type="submission" date="1997-08" db="EMBL/GenBank/DDBJ databases">
        <authorList>
            <person name="Iida A."/>
            <person name="Teshiba S."/>
            <person name="Mizobuchi K."/>
        </authorList>
    </citation>
    <scope>NUCLEOTIDE SEQUENCE [GENOMIC DNA]</scope>
    <source>
        <strain>K12 / W3110 / ATCC 27325 / DSM 5911</strain>
    </source>
</reference>
<reference key="2">
    <citation type="journal article" date="1997" name="DNA Res.">
        <title>Construction of a contiguous 874-kb sequence of the Escherichia coli-K12 genome corresponding to 50.0-68.8 min on the linkage map and analysis of its sequence features.</title>
        <authorList>
            <person name="Yamamoto Y."/>
            <person name="Aiba H."/>
            <person name="Baba T."/>
            <person name="Hayashi K."/>
            <person name="Inada T."/>
            <person name="Isono K."/>
            <person name="Itoh T."/>
            <person name="Kimura S."/>
            <person name="Kitagawa M."/>
            <person name="Makino K."/>
            <person name="Miki T."/>
            <person name="Mitsuhashi N."/>
            <person name="Mizobuchi K."/>
            <person name="Mori H."/>
            <person name="Nakade S."/>
            <person name="Nakamura Y."/>
            <person name="Nashimoto H."/>
            <person name="Oshima T."/>
            <person name="Oyama S."/>
            <person name="Saito N."/>
            <person name="Sampei G."/>
            <person name="Satoh Y."/>
            <person name="Sivasundaram S."/>
            <person name="Tagami H."/>
            <person name="Takahashi H."/>
            <person name="Takeda J."/>
            <person name="Takemoto K."/>
            <person name="Uehara K."/>
            <person name="Wada C."/>
            <person name="Yamagata S."/>
            <person name="Horiuchi T."/>
        </authorList>
    </citation>
    <scope>NUCLEOTIDE SEQUENCE [LARGE SCALE GENOMIC DNA]</scope>
    <source>
        <strain>K12 / W3110 / ATCC 27325 / DSM 5911</strain>
    </source>
</reference>
<reference key="3">
    <citation type="journal article" date="1997" name="Science">
        <title>The complete genome sequence of Escherichia coli K-12.</title>
        <authorList>
            <person name="Blattner F.R."/>
            <person name="Plunkett G. III"/>
            <person name="Bloch C.A."/>
            <person name="Perna N.T."/>
            <person name="Burland V."/>
            <person name="Riley M."/>
            <person name="Collado-Vides J."/>
            <person name="Glasner J.D."/>
            <person name="Rode C.K."/>
            <person name="Mayhew G.F."/>
            <person name="Gregor J."/>
            <person name="Davis N.W."/>
            <person name="Kirkpatrick H.A."/>
            <person name="Goeden M.A."/>
            <person name="Rose D.J."/>
            <person name="Mau B."/>
            <person name="Shao Y."/>
        </authorList>
    </citation>
    <scope>NUCLEOTIDE SEQUENCE [LARGE SCALE GENOMIC DNA]</scope>
    <source>
        <strain>K12 / MG1655 / ATCC 47076</strain>
    </source>
</reference>
<reference key="4">
    <citation type="journal article" date="2006" name="Mol. Syst. Biol.">
        <title>Highly accurate genome sequences of Escherichia coli K-12 strains MG1655 and W3110.</title>
        <authorList>
            <person name="Hayashi K."/>
            <person name="Morooka N."/>
            <person name="Yamamoto Y."/>
            <person name="Fujita K."/>
            <person name="Isono K."/>
            <person name="Choi S."/>
            <person name="Ohtsubo E."/>
            <person name="Baba T."/>
            <person name="Wanner B.L."/>
            <person name="Mori H."/>
            <person name="Horiuchi T."/>
        </authorList>
    </citation>
    <scope>NUCLEOTIDE SEQUENCE [LARGE SCALE GENOMIC DNA]</scope>
    <source>
        <strain>K12 / W3110 / ATCC 27325 / DSM 5911</strain>
    </source>
</reference>
<reference key="5">
    <citation type="unpublished observations" date="1993-06">
        <authorList>
            <person name="Sprenger G.A."/>
        </authorList>
    </citation>
    <scope>PRESENCE OF TWO TRANSALDOLASES IN E.COLI</scope>
</reference>
<proteinExistence type="inferred from homology"/>
<organism>
    <name type="scientific">Escherichia coli (strain K12)</name>
    <dbReference type="NCBI Taxonomy" id="83333"/>
    <lineage>
        <taxon>Bacteria</taxon>
        <taxon>Pseudomonadati</taxon>
        <taxon>Pseudomonadota</taxon>
        <taxon>Gammaproteobacteria</taxon>
        <taxon>Enterobacterales</taxon>
        <taxon>Enterobacteriaceae</taxon>
        <taxon>Escherichia</taxon>
    </lineage>
</organism>
<accession>P0A867</accession>
<accession>P78258</accession>
<accession>P80218</accession>
<keyword id="KW-0963">Cytoplasm</keyword>
<keyword id="KW-0570">Pentose shunt</keyword>
<keyword id="KW-1185">Reference proteome</keyword>
<keyword id="KW-0704">Schiff base</keyword>
<keyword id="KW-0808">Transferase</keyword>
<comment type="function">
    <text>Transaldolase is important for the balance of metabolites in the pentose-phosphate pathway.</text>
</comment>
<comment type="catalytic activity">
    <reaction>
        <text>D-sedoheptulose 7-phosphate + D-glyceraldehyde 3-phosphate = D-erythrose 4-phosphate + beta-D-fructose 6-phosphate</text>
        <dbReference type="Rhea" id="RHEA:17053"/>
        <dbReference type="ChEBI" id="CHEBI:16897"/>
        <dbReference type="ChEBI" id="CHEBI:57483"/>
        <dbReference type="ChEBI" id="CHEBI:57634"/>
        <dbReference type="ChEBI" id="CHEBI:59776"/>
        <dbReference type="EC" id="2.2.1.2"/>
    </reaction>
</comment>
<comment type="pathway">
    <text>Carbohydrate degradation; pentose phosphate pathway; D-glyceraldehyde 3-phosphate and beta-D-fructose 6-phosphate from D-ribose 5-phosphate and D-xylulose 5-phosphate (non-oxidative stage): step 2/3.</text>
</comment>
<comment type="subunit">
    <text evidence="1">Homodimer.</text>
</comment>
<comment type="subcellular location">
    <subcellularLocation>
        <location evidence="2">Cytoplasm</location>
    </subcellularLocation>
</comment>
<comment type="similarity">
    <text evidence="2">Belongs to the transaldolase family. Type 1 subfamily.</text>
</comment>
<gene>
    <name type="primary">talA</name>
    <name type="ordered locus">b2464</name>
    <name type="ordered locus">JW2448</name>
</gene>
<name>TALA_ECOLI</name>
<protein>
    <recommendedName>
        <fullName>Transaldolase A</fullName>
        <ecNumber>2.2.1.2</ecNumber>
    </recommendedName>
</protein>
<feature type="chain" id="PRO_0000173590" description="Transaldolase A">
    <location>
        <begin position="1"/>
        <end position="316"/>
    </location>
</feature>
<feature type="active site" description="Schiff-base intermediate with substrate" evidence="1">
    <location>
        <position position="131"/>
    </location>
</feature>
<evidence type="ECO:0000250" key="1"/>
<evidence type="ECO:0000305" key="2"/>